<gene>
    <name evidence="1" type="primary">hisS</name>
    <name type="ordered locus">cu0947</name>
</gene>
<name>SYH_CORU7</name>
<reference key="1">
    <citation type="journal article" date="2008" name="J. Biotechnol.">
        <title>The lifestyle of Corynebacterium urealyticum derived from its complete genome sequence established by pyrosequencing.</title>
        <authorList>
            <person name="Tauch A."/>
            <person name="Trost E."/>
            <person name="Tilker A."/>
            <person name="Ludewig U."/>
            <person name="Schneiker S."/>
            <person name="Goesmann A."/>
            <person name="Arnold W."/>
            <person name="Bekel T."/>
            <person name="Brinkrolf K."/>
            <person name="Brune I."/>
            <person name="Goetker S."/>
            <person name="Kalinowski J."/>
            <person name="Kamp P.-B."/>
            <person name="Lobo F.P."/>
            <person name="Viehoever P."/>
            <person name="Weisshaar B."/>
            <person name="Soriano F."/>
            <person name="Droege M."/>
            <person name="Puehler A."/>
        </authorList>
    </citation>
    <scope>NUCLEOTIDE SEQUENCE [LARGE SCALE GENOMIC DNA]</scope>
    <source>
        <strain>ATCC 43042 / DSM 7109</strain>
    </source>
</reference>
<protein>
    <recommendedName>
        <fullName evidence="1">Histidine--tRNA ligase</fullName>
        <ecNumber evidence="1">6.1.1.21</ecNumber>
    </recommendedName>
    <alternativeName>
        <fullName evidence="1">Histidyl-tRNA synthetase</fullName>
        <shortName evidence="1">HisRS</shortName>
    </alternativeName>
</protein>
<accession>B1VDK9</accession>
<dbReference type="EC" id="6.1.1.21" evidence="1"/>
<dbReference type="EMBL" id="AM942444">
    <property type="protein sequence ID" value="CAQ04907.1"/>
    <property type="molecule type" value="Genomic_DNA"/>
</dbReference>
<dbReference type="RefSeq" id="WP_012360195.1">
    <property type="nucleotide sequence ID" value="NC_010545.1"/>
</dbReference>
<dbReference type="SMR" id="B1VDK9"/>
<dbReference type="STRING" id="504474.cu0947"/>
<dbReference type="GeneID" id="60603727"/>
<dbReference type="KEGG" id="cur:cu0947"/>
<dbReference type="eggNOG" id="COG0124">
    <property type="taxonomic scope" value="Bacteria"/>
</dbReference>
<dbReference type="HOGENOM" id="CLU_025113_1_1_11"/>
<dbReference type="Proteomes" id="UP000001727">
    <property type="component" value="Chromosome"/>
</dbReference>
<dbReference type="GO" id="GO:0005737">
    <property type="term" value="C:cytoplasm"/>
    <property type="evidence" value="ECO:0007669"/>
    <property type="project" value="UniProtKB-SubCell"/>
</dbReference>
<dbReference type="GO" id="GO:0005524">
    <property type="term" value="F:ATP binding"/>
    <property type="evidence" value="ECO:0007669"/>
    <property type="project" value="UniProtKB-UniRule"/>
</dbReference>
<dbReference type="GO" id="GO:0004821">
    <property type="term" value="F:histidine-tRNA ligase activity"/>
    <property type="evidence" value="ECO:0007669"/>
    <property type="project" value="UniProtKB-UniRule"/>
</dbReference>
<dbReference type="GO" id="GO:0006427">
    <property type="term" value="P:histidyl-tRNA aminoacylation"/>
    <property type="evidence" value="ECO:0007669"/>
    <property type="project" value="UniProtKB-UniRule"/>
</dbReference>
<dbReference type="CDD" id="cd00773">
    <property type="entry name" value="HisRS-like_core"/>
    <property type="match status" value="1"/>
</dbReference>
<dbReference type="CDD" id="cd00859">
    <property type="entry name" value="HisRS_anticodon"/>
    <property type="match status" value="1"/>
</dbReference>
<dbReference type="Gene3D" id="3.40.50.800">
    <property type="entry name" value="Anticodon-binding domain"/>
    <property type="match status" value="1"/>
</dbReference>
<dbReference type="Gene3D" id="3.30.930.10">
    <property type="entry name" value="Bira Bifunctional Protein, Domain 2"/>
    <property type="match status" value="1"/>
</dbReference>
<dbReference type="HAMAP" id="MF_00127">
    <property type="entry name" value="His_tRNA_synth"/>
    <property type="match status" value="1"/>
</dbReference>
<dbReference type="InterPro" id="IPR006195">
    <property type="entry name" value="aa-tRNA-synth_II"/>
</dbReference>
<dbReference type="InterPro" id="IPR045864">
    <property type="entry name" value="aa-tRNA-synth_II/BPL/LPL"/>
</dbReference>
<dbReference type="InterPro" id="IPR004154">
    <property type="entry name" value="Anticodon-bd"/>
</dbReference>
<dbReference type="InterPro" id="IPR036621">
    <property type="entry name" value="Anticodon-bd_dom_sf"/>
</dbReference>
<dbReference type="InterPro" id="IPR015807">
    <property type="entry name" value="His-tRNA-ligase"/>
</dbReference>
<dbReference type="InterPro" id="IPR041715">
    <property type="entry name" value="HisRS-like_core"/>
</dbReference>
<dbReference type="InterPro" id="IPR004516">
    <property type="entry name" value="HisRS/HisZ"/>
</dbReference>
<dbReference type="InterPro" id="IPR033656">
    <property type="entry name" value="HisRS_anticodon"/>
</dbReference>
<dbReference type="NCBIfam" id="TIGR00442">
    <property type="entry name" value="hisS"/>
    <property type="match status" value="1"/>
</dbReference>
<dbReference type="PANTHER" id="PTHR43707:SF1">
    <property type="entry name" value="HISTIDINE--TRNA LIGASE, MITOCHONDRIAL-RELATED"/>
    <property type="match status" value="1"/>
</dbReference>
<dbReference type="PANTHER" id="PTHR43707">
    <property type="entry name" value="HISTIDYL-TRNA SYNTHETASE"/>
    <property type="match status" value="1"/>
</dbReference>
<dbReference type="Pfam" id="PF03129">
    <property type="entry name" value="HGTP_anticodon"/>
    <property type="match status" value="1"/>
</dbReference>
<dbReference type="Pfam" id="PF13393">
    <property type="entry name" value="tRNA-synt_His"/>
    <property type="match status" value="1"/>
</dbReference>
<dbReference type="PIRSF" id="PIRSF001549">
    <property type="entry name" value="His-tRNA_synth"/>
    <property type="match status" value="1"/>
</dbReference>
<dbReference type="SUPFAM" id="SSF52954">
    <property type="entry name" value="Class II aaRS ABD-related"/>
    <property type="match status" value="1"/>
</dbReference>
<dbReference type="SUPFAM" id="SSF55681">
    <property type="entry name" value="Class II aaRS and biotin synthetases"/>
    <property type="match status" value="1"/>
</dbReference>
<dbReference type="PROSITE" id="PS50862">
    <property type="entry name" value="AA_TRNA_LIGASE_II"/>
    <property type="match status" value="1"/>
</dbReference>
<comment type="catalytic activity">
    <reaction evidence="1">
        <text>tRNA(His) + L-histidine + ATP = L-histidyl-tRNA(His) + AMP + diphosphate + H(+)</text>
        <dbReference type="Rhea" id="RHEA:17313"/>
        <dbReference type="Rhea" id="RHEA-COMP:9665"/>
        <dbReference type="Rhea" id="RHEA-COMP:9689"/>
        <dbReference type="ChEBI" id="CHEBI:15378"/>
        <dbReference type="ChEBI" id="CHEBI:30616"/>
        <dbReference type="ChEBI" id="CHEBI:33019"/>
        <dbReference type="ChEBI" id="CHEBI:57595"/>
        <dbReference type="ChEBI" id="CHEBI:78442"/>
        <dbReference type="ChEBI" id="CHEBI:78527"/>
        <dbReference type="ChEBI" id="CHEBI:456215"/>
        <dbReference type="EC" id="6.1.1.21"/>
    </reaction>
</comment>
<comment type="subunit">
    <text evidence="1">Homodimer.</text>
</comment>
<comment type="subcellular location">
    <subcellularLocation>
        <location evidence="1">Cytoplasm</location>
    </subcellularLocation>
</comment>
<comment type="similarity">
    <text evidence="1">Belongs to the class-II aminoacyl-tRNA synthetase family.</text>
</comment>
<feature type="chain" id="PRO_1000095543" description="Histidine--tRNA ligase">
    <location>
        <begin position="1"/>
        <end position="427"/>
    </location>
</feature>
<sequence>MTNSGEKKFQPLHAPKGIPDYVPPQSSEFLAVRTAFLDAAHNAGYEHIELPVFEDTSLFARGVGESTDVVSKEMYTFADRGGRSVTLRPEGTAGVMRAVIQHNLDRGQLPAKLAYHGPFFRYERPQAGRFRQLQQVGVEAIGVDDPALDAEVIALADRCFRSIGLDGFRLELTSLGDSTDRPAYRAKLQEFLATLPLDEETQRRAELNPLRVLDDKRPQMQEMLADAPLMKDHLSDSSREHFETVTGLLEDMGVEYTINPRMVRGLDYYTKTCFEFVHDGLGAQSGIGGGGRYDGLMAQLGGQDLSGIGFGLGVDRALLALEAEGKTASTGRRVDVFGIPMGDAAKRHMAALINELRAAGVAADMAYGNRGLKGAMKAANRAHAQLAVVIGDQELEAGTVAVKDLQLGEQHDVAVADLVTHIRRQLA</sequence>
<proteinExistence type="inferred from homology"/>
<keyword id="KW-0030">Aminoacyl-tRNA synthetase</keyword>
<keyword id="KW-0067">ATP-binding</keyword>
<keyword id="KW-0963">Cytoplasm</keyword>
<keyword id="KW-0436">Ligase</keyword>
<keyword id="KW-0547">Nucleotide-binding</keyword>
<keyword id="KW-0648">Protein biosynthesis</keyword>
<keyword id="KW-1185">Reference proteome</keyword>
<evidence type="ECO:0000255" key="1">
    <source>
        <dbReference type="HAMAP-Rule" id="MF_00127"/>
    </source>
</evidence>
<organism>
    <name type="scientific">Corynebacterium urealyticum (strain ATCC 43042 / DSM 7109)</name>
    <dbReference type="NCBI Taxonomy" id="504474"/>
    <lineage>
        <taxon>Bacteria</taxon>
        <taxon>Bacillati</taxon>
        <taxon>Actinomycetota</taxon>
        <taxon>Actinomycetes</taxon>
        <taxon>Mycobacteriales</taxon>
        <taxon>Corynebacteriaceae</taxon>
        <taxon>Corynebacterium</taxon>
    </lineage>
</organism>